<evidence type="ECO:0000255" key="1"/>
<feature type="signal peptide" evidence="1">
    <location>
        <begin position="1"/>
        <end position="33"/>
    </location>
</feature>
<feature type="chain" id="PRO_0000259706" description="Uncharacterized protein YobH">
    <location>
        <begin position="34"/>
        <end position="79"/>
    </location>
</feature>
<dbReference type="EMBL" id="AE014075">
    <property type="protein sequence ID" value="AAN80694.1"/>
    <property type="molecule type" value="Genomic_DNA"/>
</dbReference>
<dbReference type="RefSeq" id="WP_001211011.1">
    <property type="nucleotide sequence ID" value="NZ_CP051263.1"/>
</dbReference>
<dbReference type="STRING" id="199310.c2235"/>
<dbReference type="KEGG" id="ecc:c2235"/>
<dbReference type="eggNOG" id="ENOG5032T57">
    <property type="taxonomic scope" value="Bacteria"/>
</dbReference>
<dbReference type="HOGENOM" id="CLU_179882_0_0_6"/>
<dbReference type="BioCyc" id="ECOL199310:C2235-MONOMER"/>
<dbReference type="Proteomes" id="UP000001410">
    <property type="component" value="Chromosome"/>
</dbReference>
<dbReference type="InterPro" id="IPR025611">
    <property type="entry name" value="YobH"/>
</dbReference>
<dbReference type="Pfam" id="PF13996">
    <property type="entry name" value="YobH"/>
    <property type="match status" value="1"/>
</dbReference>
<accession>Q8FGT6</accession>
<protein>
    <recommendedName>
        <fullName>Uncharacterized protein YobH</fullName>
    </recommendedName>
</protein>
<reference key="1">
    <citation type="journal article" date="2002" name="Proc. Natl. Acad. Sci. U.S.A.">
        <title>Extensive mosaic structure revealed by the complete genome sequence of uropathogenic Escherichia coli.</title>
        <authorList>
            <person name="Welch R.A."/>
            <person name="Burland V."/>
            <person name="Plunkett G. III"/>
            <person name="Redford P."/>
            <person name="Roesch P."/>
            <person name="Rasko D."/>
            <person name="Buckles E.L."/>
            <person name="Liou S.-R."/>
            <person name="Boutin A."/>
            <person name="Hackett J."/>
            <person name="Stroud D."/>
            <person name="Mayhew G.F."/>
            <person name="Rose D.J."/>
            <person name="Zhou S."/>
            <person name="Schwartz D.C."/>
            <person name="Perna N.T."/>
            <person name="Mobley H.L.T."/>
            <person name="Donnenberg M.S."/>
            <person name="Blattner F.R."/>
        </authorList>
    </citation>
    <scope>NUCLEOTIDE SEQUENCE [LARGE SCALE GENOMIC DNA]</scope>
    <source>
        <strain>CFT073 / ATCC 700928 / UPEC</strain>
    </source>
</reference>
<organism>
    <name type="scientific">Escherichia coli O6:H1 (strain CFT073 / ATCC 700928 / UPEC)</name>
    <dbReference type="NCBI Taxonomy" id="199310"/>
    <lineage>
        <taxon>Bacteria</taxon>
        <taxon>Pseudomonadati</taxon>
        <taxon>Pseudomonadota</taxon>
        <taxon>Gammaproteobacteria</taxon>
        <taxon>Enterobacterales</taxon>
        <taxon>Enterobacteriaceae</taxon>
        <taxon>Escherichia</taxon>
    </lineage>
</organism>
<name>YOBH_ECOL6</name>
<gene>
    <name type="primary">yobH</name>
    <name type="ordered locus">c2235</name>
</gene>
<keyword id="KW-1185">Reference proteome</keyword>
<keyword id="KW-0732">Signal</keyword>
<sequence length="79" mass="8514">MRFIIRTVMLIALVWIGLLLSGYGVLIGSKENAAGLGLQCTYLTARGTSTVQYLHTKSGFLGITDCPLLRKSNIVVDNG</sequence>
<proteinExistence type="inferred from homology"/>